<dbReference type="EMBL" id="AJ888457">
    <property type="protein sequence ID" value="CAI59881.1"/>
    <property type="molecule type" value="Genomic_DNA"/>
</dbReference>
<dbReference type="RefSeq" id="YP_319836.1">
    <property type="nucleotide sequence ID" value="NC_007409.1"/>
</dbReference>
<dbReference type="GeneID" id="4484283"/>
<dbReference type="KEGG" id="vg:4484283"/>
<dbReference type="OrthoDB" id="29171at10239"/>
<dbReference type="Proteomes" id="UP000002150">
    <property type="component" value="Genome"/>
</dbReference>
<reference key="1">
    <citation type="journal article" date="2005" name="Nature">
        <title>Virology: independent virus development outside a host.</title>
        <authorList>
            <person name="Haring M."/>
            <person name="Vestergaard G."/>
            <person name="Rachel R."/>
            <person name="Chen L."/>
            <person name="Garrett R.A."/>
            <person name="Prangishvili D."/>
        </authorList>
    </citation>
    <scope>NUCLEOTIDE SEQUENCE [GENOMIC DNA]</scope>
</reference>
<proteinExistence type="predicted"/>
<feature type="chain" id="PRO_0000389055" description="Uncharacterized protein ORF48">
    <location>
        <begin position="1"/>
        <end position="48"/>
    </location>
</feature>
<sequence>MNCLEILISKGYNMQGYSPDTLLLLSEKEGNDVEECEAYFSWLEAVYG</sequence>
<name>Y048_ATV</name>
<organismHost>
    <name type="scientific">Acidianus convivator</name>
    <dbReference type="NCBI Taxonomy" id="269667"/>
</organismHost>
<organism>
    <name type="scientific">Acidianus two-tailed virus</name>
    <name type="common">ATV</name>
    <dbReference type="NCBI Taxonomy" id="315953"/>
    <lineage>
        <taxon>Viruses</taxon>
        <taxon>Viruses incertae sedis</taxon>
        <taxon>Bicaudaviridae</taxon>
        <taxon>Bicaudavirus</taxon>
    </lineage>
</organism>
<accession>Q3V4T3</accession>
<protein>
    <recommendedName>
        <fullName>Uncharacterized protein ORF48</fullName>
    </recommendedName>
</protein>
<keyword id="KW-1185">Reference proteome</keyword>